<sequence length="413" mass="43964">MKSEELFSQAKELMPGGVSSPVRAIKPYPFYTAHAQGAHITTVDGEDLIDCCMAYGPLLLGHAHPEIKKAIAAQLEKGWLYGTPTPYEPEFARLITGDHPGMEMARFVSSGSEATMAAIRLARGFTGKSDIIKIEGGFHGAHDAVLVKAGSGATTMGVPDSAGVLPALVAHTRQLPYNDAEALEAMLASHHDIAALIIEPVLGNIGPVLPEDHYLREIREITSAYGVLLIFDEVITGYRLGIGGAQRMFGVKPDLTTLGKIIGGGLPIGAFCGRKEIMSLVAPQGPVYQAGTFSGNPLSLAAGIATIRWLHDHPGIYPDLAEKARAIGDSIGGGAGGSFVRIGSMFKYFFRDSAPKNYTEVKECDTAAFGRFWEKMRARGIFLPPSQFETNFLSAAHTSDDLATLAGGYTACL</sequence>
<proteinExistence type="inferred from homology"/>
<gene>
    <name evidence="1" type="primary">hemL</name>
    <name type="ordered locus">Mboo_1235</name>
</gene>
<accession>A7I7P2</accession>
<evidence type="ECO:0000255" key="1">
    <source>
        <dbReference type="HAMAP-Rule" id="MF_00375"/>
    </source>
</evidence>
<name>GSA_METB6</name>
<organism>
    <name type="scientific">Methanoregula boonei (strain DSM 21154 / JCM 14090 / 6A8)</name>
    <dbReference type="NCBI Taxonomy" id="456442"/>
    <lineage>
        <taxon>Archaea</taxon>
        <taxon>Methanobacteriati</taxon>
        <taxon>Methanobacteriota</taxon>
        <taxon>Stenosarchaea group</taxon>
        <taxon>Methanomicrobia</taxon>
        <taxon>Methanomicrobiales</taxon>
        <taxon>Methanoregulaceae</taxon>
        <taxon>Methanoregula</taxon>
    </lineage>
</organism>
<dbReference type="EC" id="5.4.3.8" evidence="1"/>
<dbReference type="EMBL" id="CP000780">
    <property type="protein sequence ID" value="ABS55753.1"/>
    <property type="molecule type" value="Genomic_DNA"/>
</dbReference>
<dbReference type="RefSeq" id="WP_012106784.1">
    <property type="nucleotide sequence ID" value="NC_009712.1"/>
</dbReference>
<dbReference type="SMR" id="A7I7P2"/>
<dbReference type="STRING" id="456442.Mboo_1235"/>
<dbReference type="GeneID" id="5409919"/>
<dbReference type="KEGG" id="mbn:Mboo_1235"/>
<dbReference type="eggNOG" id="arCOG00918">
    <property type="taxonomic scope" value="Archaea"/>
</dbReference>
<dbReference type="HOGENOM" id="CLU_016922_1_5_2"/>
<dbReference type="OrthoDB" id="6524at2157"/>
<dbReference type="UniPathway" id="UPA00251">
    <property type="reaction ID" value="UER00317"/>
</dbReference>
<dbReference type="Proteomes" id="UP000002408">
    <property type="component" value="Chromosome"/>
</dbReference>
<dbReference type="GO" id="GO:0005737">
    <property type="term" value="C:cytoplasm"/>
    <property type="evidence" value="ECO:0007669"/>
    <property type="project" value="UniProtKB-SubCell"/>
</dbReference>
<dbReference type="GO" id="GO:0042286">
    <property type="term" value="F:glutamate-1-semialdehyde 2,1-aminomutase activity"/>
    <property type="evidence" value="ECO:0007669"/>
    <property type="project" value="UniProtKB-UniRule"/>
</dbReference>
<dbReference type="GO" id="GO:0030170">
    <property type="term" value="F:pyridoxal phosphate binding"/>
    <property type="evidence" value="ECO:0007669"/>
    <property type="project" value="InterPro"/>
</dbReference>
<dbReference type="GO" id="GO:0008483">
    <property type="term" value="F:transaminase activity"/>
    <property type="evidence" value="ECO:0007669"/>
    <property type="project" value="InterPro"/>
</dbReference>
<dbReference type="GO" id="GO:0006782">
    <property type="term" value="P:protoporphyrinogen IX biosynthetic process"/>
    <property type="evidence" value="ECO:0007669"/>
    <property type="project" value="UniProtKB-UniRule"/>
</dbReference>
<dbReference type="CDD" id="cd00610">
    <property type="entry name" value="OAT_like"/>
    <property type="match status" value="1"/>
</dbReference>
<dbReference type="FunFam" id="3.40.640.10:FF:000021">
    <property type="entry name" value="Glutamate-1-semialdehyde 2,1-aminomutase"/>
    <property type="match status" value="1"/>
</dbReference>
<dbReference type="Gene3D" id="3.90.1150.10">
    <property type="entry name" value="Aspartate Aminotransferase, domain 1"/>
    <property type="match status" value="1"/>
</dbReference>
<dbReference type="Gene3D" id="3.40.640.10">
    <property type="entry name" value="Type I PLP-dependent aspartate aminotransferase-like (Major domain)"/>
    <property type="match status" value="1"/>
</dbReference>
<dbReference type="HAMAP" id="MF_00375">
    <property type="entry name" value="HemL_aminotrans_3"/>
    <property type="match status" value="1"/>
</dbReference>
<dbReference type="InterPro" id="IPR004639">
    <property type="entry name" value="4pyrrol_synth_GluAld_NH2Trfase"/>
</dbReference>
<dbReference type="InterPro" id="IPR005814">
    <property type="entry name" value="Aminotrans_3"/>
</dbReference>
<dbReference type="InterPro" id="IPR049704">
    <property type="entry name" value="Aminotrans_3_PPA_site"/>
</dbReference>
<dbReference type="InterPro" id="IPR015424">
    <property type="entry name" value="PyrdxlP-dep_Trfase"/>
</dbReference>
<dbReference type="InterPro" id="IPR015421">
    <property type="entry name" value="PyrdxlP-dep_Trfase_major"/>
</dbReference>
<dbReference type="InterPro" id="IPR015422">
    <property type="entry name" value="PyrdxlP-dep_Trfase_small"/>
</dbReference>
<dbReference type="NCBIfam" id="NF000818">
    <property type="entry name" value="PRK00062.1"/>
    <property type="match status" value="1"/>
</dbReference>
<dbReference type="PANTHER" id="PTHR43713">
    <property type="entry name" value="GLUTAMATE-1-SEMIALDEHYDE 2,1-AMINOMUTASE"/>
    <property type="match status" value="1"/>
</dbReference>
<dbReference type="PANTHER" id="PTHR43713:SF3">
    <property type="entry name" value="GLUTAMATE-1-SEMIALDEHYDE 2,1-AMINOMUTASE 1, CHLOROPLASTIC-RELATED"/>
    <property type="match status" value="1"/>
</dbReference>
<dbReference type="Pfam" id="PF00202">
    <property type="entry name" value="Aminotran_3"/>
    <property type="match status" value="1"/>
</dbReference>
<dbReference type="SUPFAM" id="SSF53383">
    <property type="entry name" value="PLP-dependent transferases"/>
    <property type="match status" value="1"/>
</dbReference>
<dbReference type="PROSITE" id="PS00600">
    <property type="entry name" value="AA_TRANSFER_CLASS_3"/>
    <property type="match status" value="1"/>
</dbReference>
<protein>
    <recommendedName>
        <fullName evidence="1">Glutamate-1-semialdehyde 2,1-aminomutase</fullName>
        <shortName evidence="1">GSA</shortName>
        <ecNumber evidence="1">5.4.3.8</ecNumber>
    </recommendedName>
    <alternativeName>
        <fullName evidence="1">Glutamate-1-semialdehyde aminotransferase</fullName>
        <shortName evidence="1">GSA-AT</shortName>
    </alternativeName>
</protein>
<keyword id="KW-0963">Cytoplasm</keyword>
<keyword id="KW-0413">Isomerase</keyword>
<keyword id="KW-0627">Porphyrin biosynthesis</keyword>
<keyword id="KW-0663">Pyridoxal phosphate</keyword>
<keyword id="KW-1185">Reference proteome</keyword>
<comment type="catalytic activity">
    <reaction evidence="1">
        <text>(S)-4-amino-5-oxopentanoate = 5-aminolevulinate</text>
        <dbReference type="Rhea" id="RHEA:14265"/>
        <dbReference type="ChEBI" id="CHEBI:57501"/>
        <dbReference type="ChEBI" id="CHEBI:356416"/>
        <dbReference type="EC" id="5.4.3.8"/>
    </reaction>
</comment>
<comment type="cofactor">
    <cofactor evidence="1">
        <name>pyridoxal 5'-phosphate</name>
        <dbReference type="ChEBI" id="CHEBI:597326"/>
    </cofactor>
</comment>
<comment type="pathway">
    <text evidence="1">Porphyrin-containing compound metabolism; protoporphyrin-IX biosynthesis; 5-aminolevulinate from L-glutamyl-tRNA(Glu): step 2/2.</text>
</comment>
<comment type="subcellular location">
    <subcellularLocation>
        <location evidence="1">Cytoplasm</location>
    </subcellularLocation>
</comment>
<comment type="similarity">
    <text evidence="1">Belongs to the class-III pyridoxal-phosphate-dependent aminotransferase family. HemL subfamily.</text>
</comment>
<feature type="chain" id="PRO_0000382406" description="Glutamate-1-semialdehyde 2,1-aminomutase">
    <location>
        <begin position="1"/>
        <end position="413"/>
    </location>
</feature>
<feature type="modified residue" description="N6-(pyridoxal phosphate)lysine" evidence="1">
    <location>
        <position position="260"/>
    </location>
</feature>
<reference key="1">
    <citation type="journal article" date="2015" name="Microbiology">
        <title>Genome of Methanoregula boonei 6A8 reveals adaptations to oligotrophic peatland environments.</title>
        <authorList>
            <person name="Braeuer S."/>
            <person name="Cadillo-Quiroz H."/>
            <person name="Kyrpides N."/>
            <person name="Woyke T."/>
            <person name="Goodwin L."/>
            <person name="Detter C."/>
            <person name="Podell S."/>
            <person name="Yavitt J.B."/>
            <person name="Zinder S.H."/>
        </authorList>
    </citation>
    <scope>NUCLEOTIDE SEQUENCE [LARGE SCALE GENOMIC DNA]</scope>
    <source>
        <strain>DSM 21154 / JCM 14090 / 6A8</strain>
    </source>
</reference>